<protein>
    <recommendedName>
        <fullName evidence="1">ATP synthase subunit c</fullName>
    </recommendedName>
    <alternativeName>
        <fullName evidence="1">ATP synthase F(0) sector subunit c</fullName>
    </alternativeName>
    <alternativeName>
        <fullName evidence="1">F-type ATPase subunit c</fullName>
        <shortName evidence="1">F-ATPase subunit c</shortName>
    </alternativeName>
    <alternativeName>
        <fullName evidence="1">Lipid-binding protein</fullName>
    </alternativeName>
</protein>
<evidence type="ECO:0000255" key="1">
    <source>
        <dbReference type="HAMAP-Rule" id="MF_01396"/>
    </source>
</evidence>
<dbReference type="EMBL" id="CP001144">
    <property type="protein sequence ID" value="ACH74862.1"/>
    <property type="molecule type" value="Genomic_DNA"/>
</dbReference>
<dbReference type="RefSeq" id="WP_000429386.1">
    <property type="nucleotide sequence ID" value="NC_011205.1"/>
</dbReference>
<dbReference type="SMR" id="B5FN38"/>
<dbReference type="GeneID" id="98390858"/>
<dbReference type="KEGG" id="sed:SeD_A4260"/>
<dbReference type="HOGENOM" id="CLU_148047_1_0_6"/>
<dbReference type="Proteomes" id="UP000008322">
    <property type="component" value="Chromosome"/>
</dbReference>
<dbReference type="GO" id="GO:0005886">
    <property type="term" value="C:plasma membrane"/>
    <property type="evidence" value="ECO:0007669"/>
    <property type="project" value="UniProtKB-SubCell"/>
</dbReference>
<dbReference type="GO" id="GO:0045259">
    <property type="term" value="C:proton-transporting ATP synthase complex"/>
    <property type="evidence" value="ECO:0007669"/>
    <property type="project" value="UniProtKB-KW"/>
</dbReference>
<dbReference type="GO" id="GO:0033177">
    <property type="term" value="C:proton-transporting two-sector ATPase complex, proton-transporting domain"/>
    <property type="evidence" value="ECO:0007669"/>
    <property type="project" value="InterPro"/>
</dbReference>
<dbReference type="GO" id="GO:0008289">
    <property type="term" value="F:lipid binding"/>
    <property type="evidence" value="ECO:0007669"/>
    <property type="project" value="UniProtKB-KW"/>
</dbReference>
<dbReference type="GO" id="GO:0046933">
    <property type="term" value="F:proton-transporting ATP synthase activity, rotational mechanism"/>
    <property type="evidence" value="ECO:0007669"/>
    <property type="project" value="UniProtKB-UniRule"/>
</dbReference>
<dbReference type="CDD" id="cd18185">
    <property type="entry name" value="ATP-synt_Fo_c_ATPE"/>
    <property type="match status" value="1"/>
</dbReference>
<dbReference type="FunFam" id="1.20.20.10:FF:000002">
    <property type="entry name" value="ATP synthase subunit c"/>
    <property type="match status" value="1"/>
</dbReference>
<dbReference type="Gene3D" id="1.20.20.10">
    <property type="entry name" value="F1F0 ATP synthase subunit C"/>
    <property type="match status" value="1"/>
</dbReference>
<dbReference type="HAMAP" id="MF_01396">
    <property type="entry name" value="ATP_synth_c_bact"/>
    <property type="match status" value="1"/>
</dbReference>
<dbReference type="InterPro" id="IPR005953">
    <property type="entry name" value="ATP_synth_csu_bac/chlpt"/>
</dbReference>
<dbReference type="InterPro" id="IPR000454">
    <property type="entry name" value="ATP_synth_F0_csu"/>
</dbReference>
<dbReference type="InterPro" id="IPR020537">
    <property type="entry name" value="ATP_synth_F0_csu_DDCD_BS"/>
</dbReference>
<dbReference type="InterPro" id="IPR038662">
    <property type="entry name" value="ATP_synth_F0_csu_sf"/>
</dbReference>
<dbReference type="InterPro" id="IPR002379">
    <property type="entry name" value="ATPase_proteolipid_c-like_dom"/>
</dbReference>
<dbReference type="InterPro" id="IPR035921">
    <property type="entry name" value="F/V-ATP_Csub_sf"/>
</dbReference>
<dbReference type="NCBIfam" id="TIGR01260">
    <property type="entry name" value="ATP_synt_c"/>
    <property type="match status" value="1"/>
</dbReference>
<dbReference type="NCBIfam" id="NF005363">
    <property type="entry name" value="PRK06876.1"/>
    <property type="match status" value="1"/>
</dbReference>
<dbReference type="Pfam" id="PF00137">
    <property type="entry name" value="ATP-synt_C"/>
    <property type="match status" value="1"/>
</dbReference>
<dbReference type="PRINTS" id="PR00124">
    <property type="entry name" value="ATPASEC"/>
</dbReference>
<dbReference type="SUPFAM" id="SSF81333">
    <property type="entry name" value="F1F0 ATP synthase subunit C"/>
    <property type="match status" value="1"/>
</dbReference>
<dbReference type="PROSITE" id="PS00605">
    <property type="entry name" value="ATPASE_C"/>
    <property type="match status" value="1"/>
</dbReference>
<keyword id="KW-0066">ATP synthesis</keyword>
<keyword id="KW-0997">Cell inner membrane</keyword>
<keyword id="KW-1003">Cell membrane</keyword>
<keyword id="KW-0138">CF(0)</keyword>
<keyword id="KW-0375">Hydrogen ion transport</keyword>
<keyword id="KW-0406">Ion transport</keyword>
<keyword id="KW-0446">Lipid-binding</keyword>
<keyword id="KW-0472">Membrane</keyword>
<keyword id="KW-0812">Transmembrane</keyword>
<keyword id="KW-1133">Transmembrane helix</keyword>
<keyword id="KW-0813">Transport</keyword>
<organism>
    <name type="scientific">Salmonella dublin (strain CT_02021853)</name>
    <dbReference type="NCBI Taxonomy" id="439851"/>
    <lineage>
        <taxon>Bacteria</taxon>
        <taxon>Pseudomonadati</taxon>
        <taxon>Pseudomonadota</taxon>
        <taxon>Gammaproteobacteria</taxon>
        <taxon>Enterobacterales</taxon>
        <taxon>Enterobacteriaceae</taxon>
        <taxon>Salmonella</taxon>
    </lineage>
</organism>
<accession>B5FN38</accession>
<comment type="function">
    <text evidence="1">F(1)F(0) ATP synthase produces ATP from ADP in the presence of a proton or sodium gradient. F-type ATPases consist of two structural domains, F(1) containing the extramembraneous catalytic core and F(0) containing the membrane proton channel, linked together by a central stalk and a peripheral stalk. During catalysis, ATP synthesis in the catalytic domain of F(1) is coupled via a rotary mechanism of the central stalk subunits to proton translocation.</text>
</comment>
<comment type="function">
    <text evidence="1">Key component of the F(0) channel; it plays a direct role in translocation across the membrane. A homomeric c-ring of between 10-14 subunits forms the central stalk rotor element with the F(1) delta and epsilon subunits.</text>
</comment>
<comment type="subunit">
    <text evidence="1">F-type ATPases have 2 components, F(1) - the catalytic core - and F(0) - the membrane proton channel. F(1) has five subunits: alpha(3), beta(3), gamma(1), delta(1), epsilon(1). F(0) has three main subunits: a(1), b(2) and c(10-14). The alpha and beta chains form an alternating ring which encloses part of the gamma chain. F(1) is attached to F(0) by a central stalk formed by the gamma and epsilon chains, while a peripheral stalk is formed by the delta and b chains.</text>
</comment>
<comment type="subcellular location">
    <subcellularLocation>
        <location evidence="1">Cell inner membrane</location>
        <topology evidence="1">Multi-pass membrane protein</topology>
    </subcellularLocation>
</comment>
<comment type="similarity">
    <text evidence="1">Belongs to the ATPase C chain family.</text>
</comment>
<name>ATPL_SALDC</name>
<reference key="1">
    <citation type="journal article" date="2011" name="J. Bacteriol.">
        <title>Comparative genomics of 28 Salmonella enterica isolates: evidence for CRISPR-mediated adaptive sublineage evolution.</title>
        <authorList>
            <person name="Fricke W.F."/>
            <person name="Mammel M.K."/>
            <person name="McDermott P.F."/>
            <person name="Tartera C."/>
            <person name="White D.G."/>
            <person name="Leclerc J.E."/>
            <person name="Ravel J."/>
            <person name="Cebula T.A."/>
        </authorList>
    </citation>
    <scope>NUCLEOTIDE SEQUENCE [LARGE SCALE GENOMIC DNA]</scope>
    <source>
        <strain>CT_02021853</strain>
    </source>
</reference>
<gene>
    <name evidence="1" type="primary">atpE</name>
    <name type="ordered locus">SeD_A4260</name>
</gene>
<sequence length="79" mass="8256">MENLNMDLLYMAAAVMMGLAAIGAAIGIGILGGKFLEGAARQPDLIPLLRTQFFIVMGLVDAIPMIAVGLGLYVMFAVA</sequence>
<proteinExistence type="inferred from homology"/>
<feature type="chain" id="PRO_1000184456" description="ATP synthase subunit c">
    <location>
        <begin position="1"/>
        <end position="79"/>
    </location>
</feature>
<feature type="transmembrane region" description="Helical" evidence="1">
    <location>
        <begin position="11"/>
        <end position="31"/>
    </location>
</feature>
<feature type="transmembrane region" description="Helical" evidence="1">
    <location>
        <begin position="53"/>
        <end position="73"/>
    </location>
</feature>
<feature type="site" description="Reversibly protonated during proton transport" evidence="1">
    <location>
        <position position="61"/>
    </location>
</feature>